<feature type="chain" id="PRO_0000222931" description="Capsid protein">
    <location>
        <begin position="1"/>
        <end position="189"/>
    </location>
</feature>
<feature type="modified residue" description="N-acetylmethionine; by host" evidence="4">
    <location>
        <position position="1"/>
    </location>
</feature>
<feature type="sequence conflict" description="In Ref. 6; CAA30323." evidence="5" ref="6">
    <original>T</original>
    <variation>A</variation>
    <location>
        <position position="86"/>
    </location>
</feature>
<feature type="strand" evidence="8">
    <location>
        <begin position="24"/>
        <end position="26"/>
    </location>
</feature>
<feature type="strand" evidence="8">
    <location>
        <begin position="30"/>
        <end position="45"/>
    </location>
</feature>
<feature type="strand" evidence="8">
    <location>
        <begin position="47"/>
        <end position="52"/>
    </location>
</feature>
<feature type="helix" evidence="8">
    <location>
        <begin position="53"/>
        <end position="55"/>
    </location>
</feature>
<feature type="helix" evidence="8">
    <location>
        <begin position="57"/>
        <end position="63"/>
    </location>
</feature>
<feature type="strand" evidence="8">
    <location>
        <begin position="66"/>
        <end position="80"/>
    </location>
</feature>
<feature type="helix" evidence="8">
    <location>
        <begin position="83"/>
        <end position="86"/>
    </location>
</feature>
<feature type="strand" evidence="8">
    <location>
        <begin position="89"/>
        <end position="97"/>
    </location>
</feature>
<feature type="helix" evidence="8">
    <location>
        <begin position="104"/>
        <end position="109"/>
    </location>
</feature>
<feature type="strand" evidence="8">
    <location>
        <begin position="110"/>
        <end position="112"/>
    </location>
</feature>
<feature type="strand" evidence="8">
    <location>
        <begin position="114"/>
        <end position="118"/>
    </location>
</feature>
<feature type="strand" evidence="8">
    <location>
        <begin position="129"/>
        <end position="131"/>
    </location>
</feature>
<feature type="helix" evidence="8">
    <location>
        <begin position="134"/>
        <end position="136"/>
    </location>
</feature>
<feature type="strand" evidence="8">
    <location>
        <begin position="140"/>
        <end position="142"/>
    </location>
</feature>
<feature type="strand" evidence="8">
    <location>
        <begin position="151"/>
        <end position="158"/>
    </location>
</feature>
<feature type="strand" evidence="8">
    <location>
        <begin position="168"/>
        <end position="182"/>
    </location>
</feature>
<protein>
    <recommendedName>
        <fullName>Capsid protein</fullName>
    </recommendedName>
    <alternativeName>
        <fullName>Coat protein</fullName>
    </alternativeName>
    <alternativeName>
        <fullName>Virion protein</fullName>
    </alternativeName>
</protein>
<sequence>MEIDKELAPQDRTVTVATVLPAVPGPSPLTIKQPFQSEVLFAGTKDAEASLTIANIDSVSTLTTFYRHASLESLWVTIHPTLQAPTFPTTVGVCWVPANSPVTPAQITKTYGGQIFCIGGAINTLSPLIVKCPLEMMNPRVKDSIQYLDSPKLLISITAQPTAPPASTCIITVSGTLSMHSPLITDTST</sequence>
<accession>P03608</accession>
<proteinExistence type="evidence at protein level"/>
<reference key="1">
    <citation type="journal article" date="1973" name="Biochim. Biophys. Acta">
        <title>Study of the primary structure of the protein from turnip yellow mosaic virus. III. Sequence of the chymotryptic peptides of the aminoethylated protein and of order of the tryptic peptides.</title>
        <authorList>
            <person name="Stehelin D."/>
            <person name="Peter R."/>
            <person name="Duranton H."/>
        </authorList>
    </citation>
    <scope>PROTEIN SEQUENCE</scope>
    <scope>ACETYLATION AT MET-1</scope>
</reference>
<reference key="2">
    <citation type="journal article" date="1978" name="Cell">
        <title>Nucleotide sequence of turnip yellow mosaic virus coat protein mRNA.</title>
        <authorList>
            <person name="Guilley H."/>
            <person name="Briand J.-P."/>
        </authorList>
    </citation>
    <scope>NUCLEOTIDE SEQUENCE [MRNA]</scope>
</reference>
<reference key="3">
    <citation type="journal article" date="1977" name="Eur. J. Biochem.">
        <title>Nucleotide sequence (n=159) of the amino-acid-accepting 3'-OH extremity of turnip-yellow-mosaic-virus RNA and the last portion of its coat-protein cistron.</title>
        <authorList>
            <person name="Briand J.-P."/>
            <person name="Jonard G."/>
            <person name="Guilley H."/>
            <person name="Richards K."/>
            <person name="Hirth L."/>
        </authorList>
    </citation>
    <scope>NUCLEOTIDE SEQUENCE [GENOMIC RNA]</scope>
</reference>
<reference key="4">
    <citation type="journal article" date="1977" name="Eur. J. Biochem.">
        <title>Studies on the sequence of the 3'-terminal region of turnip-yellow-mosaic-virus RNA.</title>
        <authorList>
            <person name="Silberklang M."/>
            <person name="Prochiantz A."/>
            <person name="Haenni A.L."/>
            <person name="RajBhandary U.L."/>
        </authorList>
    </citation>
    <scope>NUCLEOTIDE SEQUENCE [GENOMIC RNA]</scope>
</reference>
<reference key="5">
    <citation type="journal article" date="1982" name="Virology">
        <title>Analysis of the in vitro coding properties of the 3' region of turnip yellow mosaic virus genomic RNA.</title>
        <authorList>
            <person name="Morch M.D."/>
            <person name="Drugeon G."/>
            <person name="Benicourt C."/>
        </authorList>
    </citation>
    <scope>NUCLEOTIDE SEQUENCE [GENOMIC RNA]</scope>
</reference>
<reference key="6">
    <citation type="journal article" date="1988" name="Nucleic Acids Res.">
        <title>Overlapping open reading frames revealed by complete nucleotide sequencing of turnip yellow mosaic virus genomic RNA.</title>
        <authorList>
            <person name="Morch M.D."/>
            <person name="Boyer J.C."/>
            <person name="Haenni A.L."/>
        </authorList>
    </citation>
    <scope>NUCLEOTIDE SEQUENCE [GENOMIC RNA]</scope>
</reference>
<reference key="7">
    <citation type="journal article" date="1992" name="Plant Mol. Biol.">
        <title>Genomic RNA sequence of turnip yellow mosaic virus isolate TYMC, a cDNA-based clone with verified infectivity.</title>
        <authorList>
            <person name="Dreher T.W."/>
            <person name="Bransom K.L."/>
        </authorList>
    </citation>
    <scope>NUCLEOTIDE SEQUENCE [GENOMIC RNA]</scope>
    <source>
        <strain>Isolate TYMC</strain>
    </source>
</reference>
<reference evidence="6" key="8">
    <citation type="journal article" date="1996" name="Nat. Struct. Biol.">
        <title>Crystal structure of turnip yellow mosaic virus.</title>
        <authorList>
            <person name="Canady M.A."/>
            <person name="Larson S.B."/>
            <person name="Day J."/>
            <person name="McPherson A."/>
        </authorList>
    </citation>
    <scope>X-RAY CRYSTALLOGRAPHY (3.2 ANGSTROMS)</scope>
    <scope>FUNCTION</scope>
    <scope>SUBCELLULAR LOCATION</scope>
</reference>
<reference evidence="7" key="9">
    <citation type="journal article" date="2004" name="J. Mol. Biol.">
        <title>Crystal structure of an empty capsid of turnip yellow mosaic virus.</title>
        <authorList>
            <person name="van Roon A.M."/>
            <person name="Bink H.H."/>
            <person name="Plaisier J.R."/>
            <person name="Pleij C.W."/>
            <person name="Abrahams J.P."/>
            <person name="Pannu N.S."/>
        </authorList>
    </citation>
    <scope>X-RAY CRYSTALLOGRAPHY (3.75 ANGSTROMS)</scope>
    <scope>FUNCTION</scope>
    <scope>SUBCELLULAR LOCATION</scope>
</reference>
<keyword id="KW-0002">3D-structure</keyword>
<keyword id="KW-0007">Acetylation</keyword>
<keyword id="KW-0167">Capsid protein</keyword>
<keyword id="KW-0903">Direct protein sequencing</keyword>
<keyword id="KW-1185">Reference proteome</keyword>
<keyword id="KW-1142">T=3 icosahedral capsid protein</keyword>
<keyword id="KW-0946">Virion</keyword>
<organismHost>
    <name type="scientific">Brassica</name>
    <dbReference type="NCBI Taxonomy" id="3705"/>
</organismHost>
<organismHost>
    <name type="scientific">Brassica rapa subsp. pekinensis</name>
    <name type="common">Chinese cabbage</name>
    <name type="synonym">Brassica pekinensis</name>
    <dbReference type="NCBI Taxonomy" id="51351"/>
</organismHost>
<organismHost>
    <name type="scientific">Cardamine lilacina</name>
    <dbReference type="NCBI Taxonomy" id="82359"/>
</organismHost>
<dbReference type="EMBL" id="V01418">
    <property type="protein sequence ID" value="CAA24690.1"/>
    <property type="molecule type" value="mRNA"/>
</dbReference>
<dbReference type="EMBL" id="AH002387">
    <property type="protein sequence ID" value="AAA46590.1"/>
    <property type="molecule type" value="Genomic_RNA"/>
</dbReference>
<dbReference type="EMBL" id="X07441">
    <property type="protein sequence ID" value="CAA30323.1"/>
    <property type="molecule type" value="Genomic_RNA"/>
</dbReference>
<dbReference type="EMBL" id="X16378">
    <property type="protein sequence ID" value="CAA34416.1"/>
    <property type="molecule type" value="Genomic_RNA"/>
</dbReference>
<dbReference type="EMBL" id="M54918">
    <property type="protein sequence ID" value="AAA46604.1"/>
    <property type="molecule type" value="Genomic_RNA"/>
</dbReference>
<dbReference type="PIR" id="S19153">
    <property type="entry name" value="VCTY"/>
</dbReference>
<dbReference type="RefSeq" id="NP_663298.1">
    <property type="nucleotide sequence ID" value="NC_004063.1"/>
</dbReference>
<dbReference type="PDB" id="1AUY">
    <property type="method" value="X-ray"/>
    <property type="resolution" value="3.00 A"/>
    <property type="chains" value="A/B/C=1-189"/>
</dbReference>
<dbReference type="PDB" id="1W39">
    <property type="method" value="X-ray"/>
    <property type="resolution" value="3.75 A"/>
    <property type="chains" value="A/B/C=1-189"/>
</dbReference>
<dbReference type="PDBsum" id="1AUY"/>
<dbReference type="PDBsum" id="1W39"/>
<dbReference type="SMR" id="P03608"/>
<dbReference type="GeneID" id="951157"/>
<dbReference type="KEGG" id="vg:951157"/>
<dbReference type="OrthoDB" id="15633at10239"/>
<dbReference type="EvolutionaryTrace" id="P03608"/>
<dbReference type="Proteomes" id="UP000000401">
    <property type="component" value="Genome"/>
</dbReference>
<dbReference type="GO" id="GO:0039617">
    <property type="term" value="C:T=3 icosahedral viral capsid"/>
    <property type="evidence" value="ECO:0007669"/>
    <property type="project" value="UniProtKB-KW"/>
</dbReference>
<dbReference type="GO" id="GO:0005198">
    <property type="term" value="F:structural molecule activity"/>
    <property type="evidence" value="ECO:0007669"/>
    <property type="project" value="InterPro"/>
</dbReference>
<dbReference type="Gene3D" id="2.60.120.20">
    <property type="match status" value="1"/>
</dbReference>
<dbReference type="InterPro" id="IPR000574">
    <property type="entry name" value="Tymo_coat"/>
</dbReference>
<dbReference type="InterPro" id="IPR029053">
    <property type="entry name" value="Viral_coat"/>
</dbReference>
<dbReference type="Pfam" id="PF00983">
    <property type="entry name" value="Tymo_coat"/>
    <property type="match status" value="1"/>
</dbReference>
<dbReference type="SUPFAM" id="SSF88633">
    <property type="entry name" value="Positive stranded ssRNA viruses"/>
    <property type="match status" value="1"/>
</dbReference>
<comment type="function">
    <text evidence="2 3">Self-assembles to form a T=3 icosahedral capsid composed of 180 copies of the capsid protein. The capsid encapsulates the single-stranded RNA genome (PubMed:15321716, PubMed:8784351). A pentameric unit may be lost during decapsidation (PubMed:15321716, PubMed:8784351).</text>
</comment>
<comment type="subcellular location">
    <subcellularLocation>
        <location evidence="1">Virion</location>
    </subcellularLocation>
</comment>
<comment type="similarity">
    <text evidence="5">Belongs to the tymoviruses capsid protein family.</text>
</comment>
<comment type="online information" name="Virus Particle ExploreR db">
    <link uri="https://viperdb.org/Info_Page.php?VDB=1auy"/>
    <text>Icosahedral capsid structure</text>
</comment>
<organism>
    <name type="scientific">Turnip yellow mosaic virus</name>
    <dbReference type="NCBI Taxonomy" id="12154"/>
    <lineage>
        <taxon>Viruses</taxon>
        <taxon>Riboviria</taxon>
        <taxon>Orthornavirae</taxon>
        <taxon>Kitrinoviricota</taxon>
        <taxon>Alsuviricetes</taxon>
        <taxon>Tymovirales</taxon>
        <taxon>Tymoviridae</taxon>
        <taxon>Tymovirus</taxon>
        <taxon>Tymovirus brassicae</taxon>
    </lineage>
</organism>
<name>CAPSD_TYMV</name>
<evidence type="ECO:0000250" key="1">
    <source>
        <dbReference type="UniProtKB" id="P20125"/>
    </source>
</evidence>
<evidence type="ECO:0000269" key="2">
    <source>
    </source>
</evidence>
<evidence type="ECO:0000269" key="3">
    <source>
    </source>
</evidence>
<evidence type="ECO:0000269" key="4">
    <source ref="1"/>
</evidence>
<evidence type="ECO:0000305" key="5"/>
<evidence type="ECO:0007744" key="6">
    <source>
        <dbReference type="PDB" id="1AUY"/>
    </source>
</evidence>
<evidence type="ECO:0007744" key="7">
    <source>
        <dbReference type="PDB" id="1W39"/>
    </source>
</evidence>
<evidence type="ECO:0007829" key="8">
    <source>
        <dbReference type="PDB" id="1AUY"/>
    </source>
</evidence>